<feature type="chain" id="PRO_0000296864" description="DNA-directed RNA polymerase subunit alpha">
    <location>
        <begin position="1"/>
        <end position="359"/>
    </location>
</feature>
<feature type="region of interest" description="Alpha N-terminal domain (alpha-NTD)" evidence="1">
    <location>
        <begin position="1"/>
        <end position="226"/>
    </location>
</feature>
<feature type="region of interest" description="Alpha C-terminal domain (alpha-CTD)" evidence="1">
    <location>
        <begin position="241"/>
        <end position="359"/>
    </location>
</feature>
<feature type="region of interest" description="Disordered" evidence="2">
    <location>
        <begin position="315"/>
        <end position="359"/>
    </location>
</feature>
<feature type="compositionally biased region" description="Acidic residues" evidence="2">
    <location>
        <begin position="345"/>
        <end position="359"/>
    </location>
</feature>
<comment type="function">
    <text evidence="1">DNA-dependent RNA polymerase catalyzes the transcription of DNA into RNA using the four ribonucleoside triphosphates as substrates.</text>
</comment>
<comment type="catalytic activity">
    <reaction evidence="1">
        <text>RNA(n) + a ribonucleoside 5'-triphosphate = RNA(n+1) + diphosphate</text>
        <dbReference type="Rhea" id="RHEA:21248"/>
        <dbReference type="Rhea" id="RHEA-COMP:14527"/>
        <dbReference type="Rhea" id="RHEA-COMP:17342"/>
        <dbReference type="ChEBI" id="CHEBI:33019"/>
        <dbReference type="ChEBI" id="CHEBI:61557"/>
        <dbReference type="ChEBI" id="CHEBI:140395"/>
        <dbReference type="EC" id="2.7.7.6"/>
    </reaction>
</comment>
<comment type="subunit">
    <text evidence="1">Homodimer. The RNAP catalytic core consists of 2 alpha, 1 beta, 1 beta' and 1 omega subunit. When a sigma factor is associated with the core the holoenzyme is formed, which can initiate transcription.</text>
</comment>
<comment type="domain">
    <text evidence="1">The N-terminal domain is essential for RNAP assembly and basal transcription, whereas the C-terminal domain is involved in interaction with transcriptional regulators and with upstream promoter elements.</text>
</comment>
<comment type="similarity">
    <text evidence="1">Belongs to the RNA polymerase alpha chain family.</text>
</comment>
<accession>A4FPJ2</accession>
<name>RPOA_SACEN</name>
<gene>
    <name evidence="1" type="primary">rpoA</name>
    <name type="ordered locus">SACE_6803</name>
</gene>
<keyword id="KW-0240">DNA-directed RNA polymerase</keyword>
<keyword id="KW-0548">Nucleotidyltransferase</keyword>
<keyword id="KW-1185">Reference proteome</keyword>
<keyword id="KW-0804">Transcription</keyword>
<keyword id="KW-0808">Transferase</keyword>
<dbReference type="EC" id="2.7.7.6" evidence="1"/>
<dbReference type="EMBL" id="AM420293">
    <property type="protein sequence ID" value="CAM05967.1"/>
    <property type="molecule type" value="Genomic_DNA"/>
</dbReference>
<dbReference type="RefSeq" id="WP_009948670.1">
    <property type="nucleotide sequence ID" value="NC_009142.1"/>
</dbReference>
<dbReference type="SMR" id="A4FPJ2"/>
<dbReference type="STRING" id="405948.SACE_6803"/>
<dbReference type="KEGG" id="sen:SACE_6803"/>
<dbReference type="eggNOG" id="COG0202">
    <property type="taxonomic scope" value="Bacteria"/>
</dbReference>
<dbReference type="HOGENOM" id="CLU_053084_0_1_11"/>
<dbReference type="OrthoDB" id="9805706at2"/>
<dbReference type="Proteomes" id="UP000006728">
    <property type="component" value="Chromosome"/>
</dbReference>
<dbReference type="GO" id="GO:0005737">
    <property type="term" value="C:cytoplasm"/>
    <property type="evidence" value="ECO:0007669"/>
    <property type="project" value="UniProtKB-ARBA"/>
</dbReference>
<dbReference type="GO" id="GO:0000428">
    <property type="term" value="C:DNA-directed RNA polymerase complex"/>
    <property type="evidence" value="ECO:0007669"/>
    <property type="project" value="UniProtKB-KW"/>
</dbReference>
<dbReference type="GO" id="GO:0003677">
    <property type="term" value="F:DNA binding"/>
    <property type="evidence" value="ECO:0007669"/>
    <property type="project" value="UniProtKB-UniRule"/>
</dbReference>
<dbReference type="GO" id="GO:0003899">
    <property type="term" value="F:DNA-directed RNA polymerase activity"/>
    <property type="evidence" value="ECO:0007669"/>
    <property type="project" value="UniProtKB-UniRule"/>
</dbReference>
<dbReference type="GO" id="GO:0046983">
    <property type="term" value="F:protein dimerization activity"/>
    <property type="evidence" value="ECO:0007669"/>
    <property type="project" value="InterPro"/>
</dbReference>
<dbReference type="GO" id="GO:0006351">
    <property type="term" value="P:DNA-templated transcription"/>
    <property type="evidence" value="ECO:0007669"/>
    <property type="project" value="UniProtKB-UniRule"/>
</dbReference>
<dbReference type="CDD" id="cd06928">
    <property type="entry name" value="RNAP_alpha_NTD"/>
    <property type="match status" value="1"/>
</dbReference>
<dbReference type="FunFam" id="1.10.150.20:FF:000001">
    <property type="entry name" value="DNA-directed RNA polymerase subunit alpha"/>
    <property type="match status" value="1"/>
</dbReference>
<dbReference type="FunFam" id="2.170.120.12:FF:000001">
    <property type="entry name" value="DNA-directed RNA polymerase subunit alpha"/>
    <property type="match status" value="1"/>
</dbReference>
<dbReference type="Gene3D" id="1.10.150.20">
    <property type="entry name" value="5' to 3' exonuclease, C-terminal subdomain"/>
    <property type="match status" value="1"/>
</dbReference>
<dbReference type="Gene3D" id="2.170.120.12">
    <property type="entry name" value="DNA-directed RNA polymerase, insert domain"/>
    <property type="match status" value="1"/>
</dbReference>
<dbReference type="Gene3D" id="3.30.1360.10">
    <property type="entry name" value="RNA polymerase, RBP11-like subunit"/>
    <property type="match status" value="1"/>
</dbReference>
<dbReference type="HAMAP" id="MF_00059">
    <property type="entry name" value="RNApol_bact_RpoA"/>
    <property type="match status" value="1"/>
</dbReference>
<dbReference type="InterPro" id="IPR011262">
    <property type="entry name" value="DNA-dir_RNA_pol_insert"/>
</dbReference>
<dbReference type="InterPro" id="IPR011263">
    <property type="entry name" value="DNA-dir_RNA_pol_RpoA/D/Rpb3"/>
</dbReference>
<dbReference type="InterPro" id="IPR011773">
    <property type="entry name" value="DNA-dir_RpoA"/>
</dbReference>
<dbReference type="InterPro" id="IPR036603">
    <property type="entry name" value="RBP11-like"/>
</dbReference>
<dbReference type="InterPro" id="IPR011260">
    <property type="entry name" value="RNAP_asu_C"/>
</dbReference>
<dbReference type="InterPro" id="IPR036643">
    <property type="entry name" value="RNApol_insert_sf"/>
</dbReference>
<dbReference type="NCBIfam" id="NF003513">
    <property type="entry name" value="PRK05182.1-2"/>
    <property type="match status" value="1"/>
</dbReference>
<dbReference type="NCBIfam" id="NF003514">
    <property type="entry name" value="PRK05182.1-4"/>
    <property type="match status" value="1"/>
</dbReference>
<dbReference type="NCBIfam" id="NF003519">
    <property type="entry name" value="PRK05182.2-5"/>
    <property type="match status" value="1"/>
</dbReference>
<dbReference type="NCBIfam" id="TIGR02027">
    <property type="entry name" value="rpoA"/>
    <property type="match status" value="1"/>
</dbReference>
<dbReference type="Pfam" id="PF01000">
    <property type="entry name" value="RNA_pol_A_bac"/>
    <property type="match status" value="1"/>
</dbReference>
<dbReference type="Pfam" id="PF03118">
    <property type="entry name" value="RNA_pol_A_CTD"/>
    <property type="match status" value="1"/>
</dbReference>
<dbReference type="Pfam" id="PF01193">
    <property type="entry name" value="RNA_pol_L"/>
    <property type="match status" value="1"/>
</dbReference>
<dbReference type="SMART" id="SM00662">
    <property type="entry name" value="RPOLD"/>
    <property type="match status" value="1"/>
</dbReference>
<dbReference type="SUPFAM" id="SSF47789">
    <property type="entry name" value="C-terminal domain of RNA polymerase alpha subunit"/>
    <property type="match status" value="1"/>
</dbReference>
<dbReference type="SUPFAM" id="SSF56553">
    <property type="entry name" value="Insert subdomain of RNA polymerase alpha subunit"/>
    <property type="match status" value="1"/>
</dbReference>
<dbReference type="SUPFAM" id="SSF55257">
    <property type="entry name" value="RBP11-like subunits of RNA polymerase"/>
    <property type="match status" value="1"/>
</dbReference>
<organism>
    <name type="scientific">Saccharopolyspora erythraea (strain ATCC 11635 / DSM 40517 / JCM 4748 / NBRC 13426 / NCIMB 8594 / NRRL 2338)</name>
    <dbReference type="NCBI Taxonomy" id="405948"/>
    <lineage>
        <taxon>Bacteria</taxon>
        <taxon>Bacillati</taxon>
        <taxon>Actinomycetota</taxon>
        <taxon>Actinomycetes</taxon>
        <taxon>Pseudonocardiales</taxon>
        <taxon>Pseudonocardiaceae</taxon>
        <taxon>Saccharopolyspora</taxon>
    </lineage>
</organism>
<evidence type="ECO:0000255" key="1">
    <source>
        <dbReference type="HAMAP-Rule" id="MF_00059"/>
    </source>
</evidence>
<evidence type="ECO:0000256" key="2">
    <source>
        <dbReference type="SAM" id="MobiDB-lite"/>
    </source>
</evidence>
<proteinExistence type="inferred from homology"/>
<sequence>MLISQRPSLAEEAVAETRSRFVIEPLEPGFGYTLGNSLRRTLLSSIPGAAVTSLRIDGVLHEFTTIPGVKEDVTDVILNLKELVVSSEEDEPVTMYLRKQGPGEVTAADIVPPAGVTVHNPDLHIATLNGKGKLEIELVVERGRGYVPAVQNKQTGAEIGRIPVDSIYSPVLKVTYKVEATRVEQRTDFDKLILDVETKPSITPRDAVASAGRTLVELFGLARELNVDAEGIEIGPSPAEADTIAAYAMPIEDLDLTVRSYNCLKREGIHTVGELVSRSEADLLDIRNFGAKSIDEVKLKLVGLGLSLKDSPPGFDPSAAAAEYPSEGWASETETVGGLGRVEDNGYDDGQDYAETEQL</sequence>
<protein>
    <recommendedName>
        <fullName evidence="1">DNA-directed RNA polymerase subunit alpha</fullName>
        <shortName evidence="1">RNAP subunit alpha</shortName>
        <ecNumber evidence="1">2.7.7.6</ecNumber>
    </recommendedName>
    <alternativeName>
        <fullName evidence="1">RNA polymerase subunit alpha</fullName>
    </alternativeName>
    <alternativeName>
        <fullName evidence="1">Transcriptase subunit alpha</fullName>
    </alternativeName>
</protein>
<reference key="1">
    <citation type="journal article" date="2007" name="Nat. Biotechnol.">
        <title>Complete genome sequence of the erythromycin-producing bacterium Saccharopolyspora erythraea NRRL23338.</title>
        <authorList>
            <person name="Oliynyk M."/>
            <person name="Samborskyy M."/>
            <person name="Lester J.B."/>
            <person name="Mironenko T."/>
            <person name="Scott N."/>
            <person name="Dickens S."/>
            <person name="Haydock S.F."/>
            <person name="Leadlay P.F."/>
        </authorList>
    </citation>
    <scope>NUCLEOTIDE SEQUENCE [LARGE SCALE GENOMIC DNA]</scope>
    <source>
        <strain>ATCC 11635 / DSM 40517 / JCM 4748 / NBRC 13426 / NCIMB 8594 / NRRL 2338</strain>
    </source>
</reference>